<protein>
    <recommendedName>
        <fullName evidence="1">High frequency lysogenization protein HflD homolog</fullName>
    </recommendedName>
</protein>
<organism>
    <name type="scientific">Shewanella sp. (strain MR-7)</name>
    <dbReference type="NCBI Taxonomy" id="60481"/>
    <lineage>
        <taxon>Bacteria</taxon>
        <taxon>Pseudomonadati</taxon>
        <taxon>Pseudomonadota</taxon>
        <taxon>Gammaproteobacteria</taxon>
        <taxon>Alteromonadales</taxon>
        <taxon>Shewanellaceae</taxon>
        <taxon>Shewanella</taxon>
    </lineage>
</organism>
<proteinExistence type="inferred from homology"/>
<evidence type="ECO:0000255" key="1">
    <source>
        <dbReference type="HAMAP-Rule" id="MF_00695"/>
    </source>
</evidence>
<sequence length="205" mass="22740">MNEQLHNRTMAFAGILQAIAQVQHLARHGESDTDELAASLNTILVTNPESAADVYQDKAALHKGYKLVLNQLGDSSQKDVEITRYLVGILALERKLTRSNSGLAMLAERINQVNRQLHHFAITDEQVIANLASIYSDIISNLGPKIQISGNPLCLQRPIVQHKIRALLLAAMRSAVLWRQLGGKRRHLVFARKAIIDTAKKSLTL</sequence>
<gene>
    <name evidence="1" type="primary">hflD</name>
    <name type="ordered locus">Shewmr7_1677</name>
</gene>
<feature type="chain" id="PRO_1000045444" description="High frequency lysogenization protein HflD homolog">
    <location>
        <begin position="1"/>
        <end position="205"/>
    </location>
</feature>
<name>HFLD_SHESR</name>
<reference key="1">
    <citation type="submission" date="2006-08" db="EMBL/GenBank/DDBJ databases">
        <title>Complete sequence of chromosome 1 of Shewanella sp. MR-7.</title>
        <authorList>
            <person name="Copeland A."/>
            <person name="Lucas S."/>
            <person name="Lapidus A."/>
            <person name="Barry K."/>
            <person name="Detter J.C."/>
            <person name="Glavina del Rio T."/>
            <person name="Hammon N."/>
            <person name="Israni S."/>
            <person name="Dalin E."/>
            <person name="Tice H."/>
            <person name="Pitluck S."/>
            <person name="Kiss H."/>
            <person name="Brettin T."/>
            <person name="Bruce D."/>
            <person name="Han C."/>
            <person name="Tapia R."/>
            <person name="Gilna P."/>
            <person name="Schmutz J."/>
            <person name="Larimer F."/>
            <person name="Land M."/>
            <person name="Hauser L."/>
            <person name="Kyrpides N."/>
            <person name="Mikhailova N."/>
            <person name="Nealson K."/>
            <person name="Konstantinidis K."/>
            <person name="Klappenbach J."/>
            <person name="Tiedje J."/>
            <person name="Richardson P."/>
        </authorList>
    </citation>
    <scope>NUCLEOTIDE SEQUENCE [LARGE SCALE GENOMIC DNA]</scope>
    <source>
        <strain>MR-7</strain>
    </source>
</reference>
<dbReference type="EMBL" id="CP000444">
    <property type="protein sequence ID" value="ABI42671.1"/>
    <property type="molecule type" value="Genomic_DNA"/>
</dbReference>
<dbReference type="SMR" id="Q0HW34"/>
<dbReference type="KEGG" id="shm:Shewmr7_1677"/>
<dbReference type="HOGENOM" id="CLU_098920_0_0_6"/>
<dbReference type="GO" id="GO:0005737">
    <property type="term" value="C:cytoplasm"/>
    <property type="evidence" value="ECO:0007669"/>
    <property type="project" value="UniProtKB-SubCell"/>
</dbReference>
<dbReference type="GO" id="GO:0005886">
    <property type="term" value="C:plasma membrane"/>
    <property type="evidence" value="ECO:0007669"/>
    <property type="project" value="UniProtKB-SubCell"/>
</dbReference>
<dbReference type="FunFam" id="1.10.3890.10:FF:000002">
    <property type="entry name" value="High frequency lysogenization protein HflD homolog"/>
    <property type="match status" value="1"/>
</dbReference>
<dbReference type="Gene3D" id="1.10.3890.10">
    <property type="entry name" value="HflD-like"/>
    <property type="match status" value="1"/>
</dbReference>
<dbReference type="HAMAP" id="MF_00695">
    <property type="entry name" value="HflD_protein"/>
    <property type="match status" value="1"/>
</dbReference>
<dbReference type="InterPro" id="IPR007451">
    <property type="entry name" value="HflD"/>
</dbReference>
<dbReference type="InterPro" id="IPR035932">
    <property type="entry name" value="HflD-like_sf"/>
</dbReference>
<dbReference type="NCBIfam" id="NF001246">
    <property type="entry name" value="PRK00218.1-2"/>
    <property type="match status" value="1"/>
</dbReference>
<dbReference type="NCBIfam" id="NF001248">
    <property type="entry name" value="PRK00218.1-4"/>
    <property type="match status" value="1"/>
</dbReference>
<dbReference type="PANTHER" id="PTHR38100">
    <property type="entry name" value="HIGH FREQUENCY LYSOGENIZATION PROTEIN HFLD"/>
    <property type="match status" value="1"/>
</dbReference>
<dbReference type="PANTHER" id="PTHR38100:SF1">
    <property type="entry name" value="HIGH FREQUENCY LYSOGENIZATION PROTEIN HFLD"/>
    <property type="match status" value="1"/>
</dbReference>
<dbReference type="Pfam" id="PF04356">
    <property type="entry name" value="DUF489"/>
    <property type="match status" value="1"/>
</dbReference>
<dbReference type="SUPFAM" id="SSF101322">
    <property type="entry name" value="YcfC-like"/>
    <property type="match status" value="1"/>
</dbReference>
<accession>Q0HW34</accession>
<comment type="subcellular location">
    <subcellularLocation>
        <location>Cytoplasm</location>
    </subcellularLocation>
    <subcellularLocation>
        <location evidence="1">Cell inner membrane</location>
        <topology evidence="1">Peripheral membrane protein</topology>
        <orientation evidence="1">Cytoplasmic side</orientation>
    </subcellularLocation>
</comment>
<comment type="similarity">
    <text evidence="1">Belongs to the HflD family.</text>
</comment>
<keyword id="KW-0997">Cell inner membrane</keyword>
<keyword id="KW-1003">Cell membrane</keyword>
<keyword id="KW-0963">Cytoplasm</keyword>
<keyword id="KW-0472">Membrane</keyword>